<keyword id="KW-0998">Cell outer membrane</keyword>
<keyword id="KW-0449">Lipoprotein</keyword>
<keyword id="KW-0472">Membrane</keyword>
<keyword id="KW-0564">Palmitate</keyword>
<keyword id="KW-1185">Reference proteome</keyword>
<keyword id="KW-0732">Signal</keyword>
<sequence length="119" mass="13449">MQFTKWFIALPLAVTALSGCSLLERLVYRIDINQGNYVDQQSVDQLKFGMSKDQVRFVLGSPMLVENGYPDTWYYIYHHTQGHNDPVQKNLIVKFNDGGKLVNVAGDFPAGDSFFEGVN</sequence>
<accession>P0C6Q9</accession>
<accession>P52117</accession>
<accession>Q9KTQ0</accession>
<protein>
    <recommendedName>
        <fullName evidence="1">Outer membrane protein assembly factor BamE</fullName>
    </recommendedName>
</protein>
<dbReference type="EMBL" id="AE003852">
    <property type="protein sequence ID" value="AAF94013.1"/>
    <property type="status" value="ALT_INIT"/>
    <property type="molecule type" value="Genomic_DNA"/>
</dbReference>
<dbReference type="PIR" id="F82272">
    <property type="entry name" value="F82272"/>
</dbReference>
<dbReference type="RefSeq" id="NP_230498.1">
    <property type="nucleotide sequence ID" value="NC_002505.1"/>
</dbReference>
<dbReference type="RefSeq" id="WP_001160907.1">
    <property type="nucleotide sequence ID" value="NZ_LT906614.1"/>
</dbReference>
<dbReference type="SMR" id="P0C6Q9"/>
<dbReference type="STRING" id="243277.VC_0851"/>
<dbReference type="DNASU" id="2614518"/>
<dbReference type="EnsemblBacteria" id="AAF94013">
    <property type="protein sequence ID" value="AAF94013"/>
    <property type="gene ID" value="VC_0851"/>
</dbReference>
<dbReference type="GeneID" id="94014395"/>
<dbReference type="KEGG" id="vch:VC_0851"/>
<dbReference type="PATRIC" id="fig|243277.26.peg.811"/>
<dbReference type="eggNOG" id="COG2913">
    <property type="taxonomic scope" value="Bacteria"/>
</dbReference>
<dbReference type="HOGENOM" id="CLU_083835_4_0_6"/>
<dbReference type="Proteomes" id="UP000000584">
    <property type="component" value="Chromosome 1"/>
</dbReference>
<dbReference type="GO" id="GO:1990063">
    <property type="term" value="C:Bam protein complex"/>
    <property type="evidence" value="ECO:0000318"/>
    <property type="project" value="GO_Central"/>
</dbReference>
<dbReference type="GO" id="GO:0030674">
    <property type="term" value="F:protein-macromolecule adaptor activity"/>
    <property type="evidence" value="ECO:0000318"/>
    <property type="project" value="GO_Central"/>
</dbReference>
<dbReference type="GO" id="GO:0043165">
    <property type="term" value="P:Gram-negative-bacterium-type cell outer membrane assembly"/>
    <property type="evidence" value="ECO:0000318"/>
    <property type="project" value="GO_Central"/>
</dbReference>
<dbReference type="GO" id="GO:0051205">
    <property type="term" value="P:protein insertion into membrane"/>
    <property type="evidence" value="ECO:0000318"/>
    <property type="project" value="GO_Central"/>
</dbReference>
<dbReference type="Gene3D" id="3.30.1450.10">
    <property type="match status" value="1"/>
</dbReference>
<dbReference type="HAMAP" id="MF_00925">
    <property type="entry name" value="OM_assembly_BamE"/>
    <property type="match status" value="1"/>
</dbReference>
<dbReference type="InterPro" id="IPR026592">
    <property type="entry name" value="BamE"/>
</dbReference>
<dbReference type="InterPro" id="IPR037873">
    <property type="entry name" value="BamE-like"/>
</dbReference>
<dbReference type="InterPro" id="IPR007450">
    <property type="entry name" value="BamE_dom"/>
</dbReference>
<dbReference type="NCBIfam" id="NF008585">
    <property type="entry name" value="PRK11548.1"/>
    <property type="match status" value="1"/>
</dbReference>
<dbReference type="PANTHER" id="PTHR37482">
    <property type="entry name" value="OUTER MEMBRANE PROTEIN ASSEMBLY FACTOR BAME"/>
    <property type="match status" value="1"/>
</dbReference>
<dbReference type="PANTHER" id="PTHR37482:SF1">
    <property type="entry name" value="OUTER MEMBRANE PROTEIN ASSEMBLY FACTOR BAME"/>
    <property type="match status" value="1"/>
</dbReference>
<dbReference type="Pfam" id="PF04355">
    <property type="entry name" value="BamE"/>
    <property type="match status" value="1"/>
</dbReference>
<dbReference type="PROSITE" id="PS51257">
    <property type="entry name" value="PROKAR_LIPOPROTEIN"/>
    <property type="match status" value="1"/>
</dbReference>
<gene>
    <name evidence="1" type="primary">bamE</name>
    <name type="synonym">smpA</name>
    <name type="ordered locus">VC_0851</name>
</gene>
<proteinExistence type="inferred from homology"/>
<organism>
    <name type="scientific">Vibrio cholerae serotype O1 (strain ATCC 39315 / El Tor Inaba N16961)</name>
    <dbReference type="NCBI Taxonomy" id="243277"/>
    <lineage>
        <taxon>Bacteria</taxon>
        <taxon>Pseudomonadati</taxon>
        <taxon>Pseudomonadota</taxon>
        <taxon>Gammaproteobacteria</taxon>
        <taxon>Vibrionales</taxon>
        <taxon>Vibrionaceae</taxon>
        <taxon>Vibrio</taxon>
    </lineage>
</organism>
<evidence type="ECO:0000255" key="1">
    <source>
        <dbReference type="HAMAP-Rule" id="MF_00925"/>
    </source>
</evidence>
<evidence type="ECO:0000305" key="2"/>
<feature type="signal peptide" evidence="1">
    <location>
        <begin position="1"/>
        <end position="19"/>
    </location>
</feature>
<feature type="chain" id="PRO_0000032814" description="Outer membrane protein assembly factor BamE">
    <location>
        <begin position="20"/>
        <end position="119"/>
    </location>
</feature>
<feature type="lipid moiety-binding region" description="N-palmitoyl cysteine" evidence="1">
    <location>
        <position position="20"/>
    </location>
</feature>
<feature type="lipid moiety-binding region" description="S-diacylglycerol cysteine" evidence="1">
    <location>
        <position position="20"/>
    </location>
</feature>
<reference key="1">
    <citation type="journal article" date="2000" name="Nature">
        <title>DNA sequence of both chromosomes of the cholera pathogen Vibrio cholerae.</title>
        <authorList>
            <person name="Heidelberg J.F."/>
            <person name="Eisen J.A."/>
            <person name="Nelson W.C."/>
            <person name="Clayton R.A."/>
            <person name="Gwinn M.L."/>
            <person name="Dodson R.J."/>
            <person name="Haft D.H."/>
            <person name="Hickey E.K."/>
            <person name="Peterson J.D."/>
            <person name="Umayam L.A."/>
            <person name="Gill S.R."/>
            <person name="Nelson K.E."/>
            <person name="Read T.D."/>
            <person name="Tettelin H."/>
            <person name="Richardson D.L."/>
            <person name="Ermolaeva M.D."/>
            <person name="Vamathevan J.J."/>
            <person name="Bass S."/>
            <person name="Qin H."/>
            <person name="Dragoi I."/>
            <person name="Sellers P."/>
            <person name="McDonald L.A."/>
            <person name="Utterback T.R."/>
            <person name="Fleischmann R.D."/>
            <person name="Nierman W.C."/>
            <person name="White O."/>
            <person name="Salzberg S.L."/>
            <person name="Smith H.O."/>
            <person name="Colwell R.R."/>
            <person name="Mekalanos J.J."/>
            <person name="Venter J.C."/>
            <person name="Fraser C.M."/>
        </authorList>
    </citation>
    <scope>NUCLEOTIDE SEQUENCE [LARGE SCALE GENOMIC DNA]</scope>
    <source>
        <strain>ATCC 39315 / El Tor Inaba N16961</strain>
    </source>
</reference>
<name>BAME_VIBCH</name>
<comment type="function">
    <text evidence="1">Part of the outer membrane protein assembly complex, which is involved in assembly and insertion of beta-barrel proteins into the outer membrane.</text>
</comment>
<comment type="subunit">
    <text evidence="1">Part of the Bam complex.</text>
</comment>
<comment type="subcellular location">
    <subcellularLocation>
        <location evidence="1">Cell outer membrane</location>
        <topology evidence="1">Lipid-anchor</topology>
    </subcellularLocation>
</comment>
<comment type="similarity">
    <text evidence="1">Belongs to the BamE family.</text>
</comment>
<comment type="sequence caution" evidence="2">
    <conflict type="erroneous initiation">
        <sequence resource="EMBL-CDS" id="AAF94013"/>
    </conflict>
    <text>Extended N-terminus.</text>
</comment>